<feature type="chain" id="PRO_1000146771" description="Ribonuclease PH">
    <location>
        <begin position="1"/>
        <end position="248"/>
    </location>
</feature>
<feature type="binding site" evidence="1">
    <location>
        <position position="86"/>
    </location>
    <ligand>
        <name>phosphate</name>
        <dbReference type="ChEBI" id="CHEBI:43474"/>
        <note>substrate</note>
    </ligand>
</feature>
<feature type="binding site" evidence="1">
    <location>
        <begin position="124"/>
        <end position="126"/>
    </location>
    <ligand>
        <name>phosphate</name>
        <dbReference type="ChEBI" id="CHEBI:43474"/>
        <note>substrate</note>
    </ligand>
</feature>
<organism>
    <name type="scientific">Clostridium kluyveri (strain NBRC 12016)</name>
    <dbReference type="NCBI Taxonomy" id="583346"/>
    <lineage>
        <taxon>Bacteria</taxon>
        <taxon>Bacillati</taxon>
        <taxon>Bacillota</taxon>
        <taxon>Clostridia</taxon>
        <taxon>Eubacteriales</taxon>
        <taxon>Clostridiaceae</taxon>
        <taxon>Clostridium</taxon>
    </lineage>
</organism>
<reference key="1">
    <citation type="submission" date="2005-09" db="EMBL/GenBank/DDBJ databases">
        <title>Complete genome sequence of Clostridium kluyveri and comparative genomics of Clostridia species.</title>
        <authorList>
            <person name="Inui M."/>
            <person name="Nonaka H."/>
            <person name="Shinoda Y."/>
            <person name="Ikenaga Y."/>
            <person name="Abe M."/>
            <person name="Naito K."/>
            <person name="Vertes A.A."/>
            <person name="Yukawa H."/>
        </authorList>
    </citation>
    <scope>NUCLEOTIDE SEQUENCE [LARGE SCALE GENOMIC DNA]</scope>
    <source>
        <strain>NBRC 12016</strain>
    </source>
</reference>
<dbReference type="EC" id="2.7.7.56" evidence="1"/>
<dbReference type="EMBL" id="AP009049">
    <property type="protein sequence ID" value="BAH08105.1"/>
    <property type="molecule type" value="Genomic_DNA"/>
</dbReference>
<dbReference type="RefSeq" id="WP_012103786.1">
    <property type="nucleotide sequence ID" value="NC_011837.1"/>
</dbReference>
<dbReference type="SMR" id="B9DWL2"/>
<dbReference type="KEGG" id="ckr:CKR_3054"/>
<dbReference type="HOGENOM" id="CLU_050858_0_0_9"/>
<dbReference type="Proteomes" id="UP000007969">
    <property type="component" value="Chromosome"/>
</dbReference>
<dbReference type="GO" id="GO:0000175">
    <property type="term" value="F:3'-5'-RNA exonuclease activity"/>
    <property type="evidence" value="ECO:0007669"/>
    <property type="project" value="UniProtKB-UniRule"/>
</dbReference>
<dbReference type="GO" id="GO:0000049">
    <property type="term" value="F:tRNA binding"/>
    <property type="evidence" value="ECO:0007669"/>
    <property type="project" value="UniProtKB-UniRule"/>
</dbReference>
<dbReference type="GO" id="GO:0009022">
    <property type="term" value="F:tRNA nucleotidyltransferase activity"/>
    <property type="evidence" value="ECO:0007669"/>
    <property type="project" value="UniProtKB-UniRule"/>
</dbReference>
<dbReference type="GO" id="GO:0016075">
    <property type="term" value="P:rRNA catabolic process"/>
    <property type="evidence" value="ECO:0007669"/>
    <property type="project" value="UniProtKB-UniRule"/>
</dbReference>
<dbReference type="GO" id="GO:0006364">
    <property type="term" value="P:rRNA processing"/>
    <property type="evidence" value="ECO:0007669"/>
    <property type="project" value="UniProtKB-KW"/>
</dbReference>
<dbReference type="GO" id="GO:0008033">
    <property type="term" value="P:tRNA processing"/>
    <property type="evidence" value="ECO:0007669"/>
    <property type="project" value="UniProtKB-UniRule"/>
</dbReference>
<dbReference type="CDD" id="cd11362">
    <property type="entry name" value="RNase_PH_bact"/>
    <property type="match status" value="1"/>
</dbReference>
<dbReference type="FunFam" id="3.30.230.70:FF:000003">
    <property type="entry name" value="Ribonuclease PH"/>
    <property type="match status" value="1"/>
</dbReference>
<dbReference type="Gene3D" id="3.30.230.70">
    <property type="entry name" value="GHMP Kinase, N-terminal domain"/>
    <property type="match status" value="1"/>
</dbReference>
<dbReference type="HAMAP" id="MF_00564">
    <property type="entry name" value="RNase_PH"/>
    <property type="match status" value="1"/>
</dbReference>
<dbReference type="InterPro" id="IPR001247">
    <property type="entry name" value="ExoRNase_PH_dom1"/>
</dbReference>
<dbReference type="InterPro" id="IPR015847">
    <property type="entry name" value="ExoRNase_PH_dom2"/>
</dbReference>
<dbReference type="InterPro" id="IPR036345">
    <property type="entry name" value="ExoRNase_PH_dom2_sf"/>
</dbReference>
<dbReference type="InterPro" id="IPR027408">
    <property type="entry name" value="PNPase/RNase_PH_dom_sf"/>
</dbReference>
<dbReference type="InterPro" id="IPR020568">
    <property type="entry name" value="Ribosomal_Su5_D2-typ_SF"/>
</dbReference>
<dbReference type="InterPro" id="IPR050080">
    <property type="entry name" value="RNase_PH"/>
</dbReference>
<dbReference type="InterPro" id="IPR002381">
    <property type="entry name" value="RNase_PH_bac-type"/>
</dbReference>
<dbReference type="InterPro" id="IPR018336">
    <property type="entry name" value="RNase_PH_CS"/>
</dbReference>
<dbReference type="NCBIfam" id="TIGR01966">
    <property type="entry name" value="RNasePH"/>
    <property type="match status" value="1"/>
</dbReference>
<dbReference type="PANTHER" id="PTHR11953">
    <property type="entry name" value="EXOSOME COMPLEX COMPONENT"/>
    <property type="match status" value="1"/>
</dbReference>
<dbReference type="PANTHER" id="PTHR11953:SF0">
    <property type="entry name" value="EXOSOME COMPLEX COMPONENT RRP41"/>
    <property type="match status" value="1"/>
</dbReference>
<dbReference type="Pfam" id="PF01138">
    <property type="entry name" value="RNase_PH"/>
    <property type="match status" value="1"/>
</dbReference>
<dbReference type="Pfam" id="PF03725">
    <property type="entry name" value="RNase_PH_C"/>
    <property type="match status" value="1"/>
</dbReference>
<dbReference type="SUPFAM" id="SSF55666">
    <property type="entry name" value="Ribonuclease PH domain 2-like"/>
    <property type="match status" value="1"/>
</dbReference>
<dbReference type="SUPFAM" id="SSF54211">
    <property type="entry name" value="Ribosomal protein S5 domain 2-like"/>
    <property type="match status" value="1"/>
</dbReference>
<dbReference type="PROSITE" id="PS01277">
    <property type="entry name" value="RIBONUCLEASE_PH"/>
    <property type="match status" value="1"/>
</dbReference>
<keyword id="KW-0548">Nucleotidyltransferase</keyword>
<keyword id="KW-0694">RNA-binding</keyword>
<keyword id="KW-0698">rRNA processing</keyword>
<keyword id="KW-0808">Transferase</keyword>
<keyword id="KW-0819">tRNA processing</keyword>
<keyword id="KW-0820">tRNA-binding</keyword>
<protein>
    <recommendedName>
        <fullName evidence="1">Ribonuclease PH</fullName>
        <shortName evidence="1">RNase PH</shortName>
        <ecNumber evidence="1">2.7.7.56</ecNumber>
    </recommendedName>
    <alternativeName>
        <fullName evidence="1">tRNA nucleotidyltransferase</fullName>
    </alternativeName>
</protein>
<name>RNPH_CLOK1</name>
<gene>
    <name evidence="1" type="primary">rph</name>
    <name type="ordered locus">CKR_3054</name>
</gene>
<sequence length="248" mass="27589">MRVDGRKCNQIRPVKITRNYTKYAEGSVLIENGDTKVICTASIEDKVPPFLKGRGEGWITCEYNMIPRATQVRKARDINRGRIDGRTMEIQRIIGRALRSVVDLRAIGEKTIWVDCDVIQADGGTRTASISGAFVALVDAVNKLHKQNPFTIYPIRDFVSAVSVGIVNDTRMLDLCYLEDSRAKVDMNVVMTDSGEFVEIQGTGEQNPFTREDLKELLALAEKGIKSMISAQKDSLKMDSLWIGTGGE</sequence>
<accession>B9DWL2</accession>
<comment type="function">
    <text evidence="1">Phosphorolytic 3'-5' exoribonuclease that plays an important role in tRNA 3'-end maturation. Removes nucleotide residues following the 3'-CCA terminus of tRNAs; can also add nucleotides to the ends of RNA molecules by using nucleoside diphosphates as substrates, but this may not be physiologically important. Probably plays a role in initiation of 16S rRNA degradation (leading to ribosome degradation) during starvation.</text>
</comment>
<comment type="catalytic activity">
    <reaction evidence="1">
        <text>tRNA(n+1) + phosphate = tRNA(n) + a ribonucleoside 5'-diphosphate</text>
        <dbReference type="Rhea" id="RHEA:10628"/>
        <dbReference type="Rhea" id="RHEA-COMP:17343"/>
        <dbReference type="Rhea" id="RHEA-COMP:17344"/>
        <dbReference type="ChEBI" id="CHEBI:43474"/>
        <dbReference type="ChEBI" id="CHEBI:57930"/>
        <dbReference type="ChEBI" id="CHEBI:173114"/>
        <dbReference type="EC" id="2.7.7.56"/>
    </reaction>
</comment>
<comment type="subunit">
    <text evidence="1">Homohexameric ring arranged as a trimer of dimers.</text>
</comment>
<comment type="similarity">
    <text evidence="1">Belongs to the RNase PH family.</text>
</comment>
<evidence type="ECO:0000255" key="1">
    <source>
        <dbReference type="HAMAP-Rule" id="MF_00564"/>
    </source>
</evidence>
<proteinExistence type="inferred from homology"/>